<feature type="chain" id="PRO_0000347174" description="Large ribosomal subunit protein uL30">
    <location>
        <begin position="1"/>
        <end position="156"/>
    </location>
</feature>
<gene>
    <name evidence="1" type="primary">rpl30</name>
    <name type="ordered locus">Tpen_0235</name>
</gene>
<evidence type="ECO:0000255" key="1">
    <source>
        <dbReference type="HAMAP-Rule" id="MF_01371"/>
    </source>
</evidence>
<evidence type="ECO:0000305" key="2"/>
<reference key="1">
    <citation type="journal article" date="2008" name="J. Bacteriol.">
        <title>Genome sequence of Thermofilum pendens reveals an exceptional loss of biosynthetic pathways without genome reduction.</title>
        <authorList>
            <person name="Anderson I."/>
            <person name="Rodriguez J."/>
            <person name="Susanti D."/>
            <person name="Porat I."/>
            <person name="Reich C."/>
            <person name="Ulrich L.E."/>
            <person name="Elkins J.G."/>
            <person name="Mavromatis K."/>
            <person name="Lykidis A."/>
            <person name="Kim E."/>
            <person name="Thompson L.S."/>
            <person name="Nolan M."/>
            <person name="Land M."/>
            <person name="Copeland A."/>
            <person name="Lapidus A."/>
            <person name="Lucas S."/>
            <person name="Detter C."/>
            <person name="Zhulin I.B."/>
            <person name="Olsen G.J."/>
            <person name="Whitman W."/>
            <person name="Mukhopadhyay B."/>
            <person name="Bristow J."/>
            <person name="Kyrpides N."/>
        </authorList>
    </citation>
    <scope>NUCLEOTIDE SEQUENCE [LARGE SCALE GENOMIC DNA]</scope>
    <source>
        <strain>DSM 2475 / Hrk 5</strain>
    </source>
</reference>
<dbReference type="EMBL" id="CP000505">
    <property type="protein sequence ID" value="ABL77645.1"/>
    <property type="molecule type" value="Genomic_DNA"/>
</dbReference>
<dbReference type="RefSeq" id="WP_011751910.1">
    <property type="nucleotide sequence ID" value="NC_008698.1"/>
</dbReference>
<dbReference type="SMR" id="A1RWR5"/>
<dbReference type="STRING" id="368408.Tpen_0235"/>
<dbReference type="EnsemblBacteria" id="ABL77645">
    <property type="protein sequence ID" value="ABL77645"/>
    <property type="gene ID" value="Tpen_0235"/>
</dbReference>
<dbReference type="GeneID" id="4600705"/>
<dbReference type="KEGG" id="tpe:Tpen_0235"/>
<dbReference type="eggNOG" id="arCOG04086">
    <property type="taxonomic scope" value="Archaea"/>
</dbReference>
<dbReference type="HOGENOM" id="CLU_055156_6_0_2"/>
<dbReference type="OrthoDB" id="6379at2157"/>
<dbReference type="Proteomes" id="UP000000641">
    <property type="component" value="Chromosome"/>
</dbReference>
<dbReference type="GO" id="GO:0022625">
    <property type="term" value="C:cytosolic large ribosomal subunit"/>
    <property type="evidence" value="ECO:0007669"/>
    <property type="project" value="TreeGrafter"/>
</dbReference>
<dbReference type="GO" id="GO:0003723">
    <property type="term" value="F:RNA binding"/>
    <property type="evidence" value="ECO:0007669"/>
    <property type="project" value="TreeGrafter"/>
</dbReference>
<dbReference type="GO" id="GO:0003735">
    <property type="term" value="F:structural constituent of ribosome"/>
    <property type="evidence" value="ECO:0007669"/>
    <property type="project" value="InterPro"/>
</dbReference>
<dbReference type="GO" id="GO:0000463">
    <property type="term" value="P:maturation of LSU-rRNA from tricistronic rRNA transcript (SSU-rRNA, 5.8S rRNA, LSU-rRNA)"/>
    <property type="evidence" value="ECO:0007669"/>
    <property type="project" value="TreeGrafter"/>
</dbReference>
<dbReference type="GO" id="GO:0006412">
    <property type="term" value="P:translation"/>
    <property type="evidence" value="ECO:0007669"/>
    <property type="project" value="UniProtKB-UniRule"/>
</dbReference>
<dbReference type="CDD" id="cd01657">
    <property type="entry name" value="Ribosomal_L7_archeal_euk"/>
    <property type="match status" value="1"/>
</dbReference>
<dbReference type="FunFam" id="1.10.15.30:FF:000002">
    <property type="entry name" value="50S ribosomal protein L30"/>
    <property type="match status" value="1"/>
</dbReference>
<dbReference type="Gene3D" id="1.10.15.30">
    <property type="match status" value="1"/>
</dbReference>
<dbReference type="Gene3D" id="3.30.1390.20">
    <property type="entry name" value="Ribosomal protein L30, ferredoxin-like fold domain"/>
    <property type="match status" value="1"/>
</dbReference>
<dbReference type="HAMAP" id="MF_01371_A">
    <property type="entry name" value="Ribosomal_uL30_A"/>
    <property type="match status" value="1"/>
</dbReference>
<dbReference type="InterPro" id="IPR036919">
    <property type="entry name" value="Ribo_uL30_ferredoxin-like_sf"/>
</dbReference>
<dbReference type="InterPro" id="IPR039699">
    <property type="entry name" value="Ribosomal_uL30"/>
</dbReference>
<dbReference type="InterPro" id="IPR005997">
    <property type="entry name" value="Ribosomal_uL30_arc"/>
</dbReference>
<dbReference type="InterPro" id="IPR035808">
    <property type="entry name" value="Ribosomal_uL30_euk_arc"/>
</dbReference>
<dbReference type="InterPro" id="IPR016082">
    <property type="entry name" value="Ribosomal_uL30_ferredoxin-like"/>
</dbReference>
<dbReference type="NCBIfam" id="NF004711">
    <property type="entry name" value="PRK06049.1"/>
    <property type="match status" value="1"/>
</dbReference>
<dbReference type="NCBIfam" id="TIGR01309">
    <property type="entry name" value="uL30_arch"/>
    <property type="match status" value="1"/>
</dbReference>
<dbReference type="PANTHER" id="PTHR11524">
    <property type="entry name" value="60S RIBOSOMAL PROTEIN L7"/>
    <property type="match status" value="1"/>
</dbReference>
<dbReference type="PANTHER" id="PTHR11524:SF16">
    <property type="entry name" value="LARGE RIBOSOMAL SUBUNIT PROTEIN UL30"/>
    <property type="match status" value="1"/>
</dbReference>
<dbReference type="Pfam" id="PF00327">
    <property type="entry name" value="Ribosomal_L30"/>
    <property type="match status" value="1"/>
</dbReference>
<dbReference type="SUPFAM" id="SSF55129">
    <property type="entry name" value="Ribosomal protein L30p/L7e"/>
    <property type="match status" value="1"/>
</dbReference>
<keyword id="KW-1185">Reference proteome</keyword>
<keyword id="KW-0687">Ribonucleoprotein</keyword>
<keyword id="KW-0689">Ribosomal protein</keyword>
<comment type="subunit">
    <text evidence="1">Part of the 50S ribosomal subunit.</text>
</comment>
<comment type="similarity">
    <text evidence="1">Belongs to the universal ribosomal protein uL30 family.</text>
</comment>
<protein>
    <recommendedName>
        <fullName evidence="1">Large ribosomal subunit protein uL30</fullName>
    </recommendedName>
    <alternativeName>
        <fullName evidence="2">50S ribosomal protein L30</fullName>
    </alternativeName>
</protein>
<organism>
    <name type="scientific">Thermofilum pendens (strain DSM 2475 / Hrk 5)</name>
    <dbReference type="NCBI Taxonomy" id="368408"/>
    <lineage>
        <taxon>Archaea</taxon>
        <taxon>Thermoproteota</taxon>
        <taxon>Thermoprotei</taxon>
        <taxon>Thermofilales</taxon>
        <taxon>Thermofilaceae</taxon>
        <taxon>Thermofilum</taxon>
    </lineage>
</organism>
<proteinExistence type="inferred from homology"/>
<name>RL30_THEPD</name>
<accession>A1RWR5</accession>
<sequence>MALYLVIRLRGQPDRRPEEEKALELLRLHKVYHAVLVKDDPSIKGMLERTLSSAVTWGEINKETLVELLKRRGRITGNKRLTEEYLKKIGFNSFEELAEALISGKVSLEDLPGVKPVFRLRPPSGGFRGTIRRNINARGELGYRGADINNLVLRML</sequence>